<proteinExistence type="inferred from homology"/>
<evidence type="ECO:0000255" key="1">
    <source>
        <dbReference type="HAMAP-Rule" id="MF_00489"/>
    </source>
</evidence>
<dbReference type="EMBL" id="CP000091">
    <property type="protein sequence ID" value="AAZ64486.1"/>
    <property type="molecule type" value="Genomic_DNA"/>
</dbReference>
<dbReference type="KEGG" id="reu:Reut_B5138"/>
<dbReference type="eggNOG" id="COG1671">
    <property type="taxonomic scope" value="Bacteria"/>
</dbReference>
<dbReference type="HOGENOM" id="CLU_106619_2_1_4"/>
<dbReference type="OrthoDB" id="9798918at2"/>
<dbReference type="CDD" id="cd18720">
    <property type="entry name" value="PIN_YqxD-like"/>
    <property type="match status" value="1"/>
</dbReference>
<dbReference type="HAMAP" id="MF_00489">
    <property type="entry name" value="UPF0178"/>
    <property type="match status" value="1"/>
</dbReference>
<dbReference type="InterPro" id="IPR003791">
    <property type="entry name" value="UPF0178"/>
</dbReference>
<dbReference type="NCBIfam" id="NF001095">
    <property type="entry name" value="PRK00124.1"/>
    <property type="match status" value="1"/>
</dbReference>
<dbReference type="PANTHER" id="PTHR35146">
    <property type="entry name" value="UPF0178 PROTEIN YAII"/>
    <property type="match status" value="1"/>
</dbReference>
<dbReference type="PANTHER" id="PTHR35146:SF1">
    <property type="entry name" value="UPF0178 PROTEIN YAII"/>
    <property type="match status" value="1"/>
</dbReference>
<dbReference type="Pfam" id="PF02639">
    <property type="entry name" value="DUF188"/>
    <property type="match status" value="1"/>
</dbReference>
<gene>
    <name type="ordered locus">Reut_B5138</name>
</gene>
<sequence length="150" mass="16420">MQVLVDADACPVVVKEMLYRAAQRLEVCVTLVANKFLRTPPSRFIRALQVPAGFDAADDRIVELVIHGDLVITADIPLAAAALEKGAYVLDPRGSWFSRENIQERLTMRDVMEQLRSSGIDTGGPAPYAAQDGKAFAGQLDRFLARHVSP</sequence>
<accession>Q46QU8</accession>
<protein>
    <recommendedName>
        <fullName evidence="1">UPF0178 protein Reut_B5138</fullName>
    </recommendedName>
</protein>
<feature type="chain" id="PRO_0000241823" description="UPF0178 protein Reut_B5138">
    <location>
        <begin position="1"/>
        <end position="150"/>
    </location>
</feature>
<comment type="similarity">
    <text evidence="1">Belongs to the UPF0178 family.</text>
</comment>
<name>Y5138_CUPPJ</name>
<organism>
    <name type="scientific">Cupriavidus pinatubonensis (strain JMP 134 / LMG 1197)</name>
    <name type="common">Cupriavidus necator (strain JMP 134)</name>
    <dbReference type="NCBI Taxonomy" id="264198"/>
    <lineage>
        <taxon>Bacteria</taxon>
        <taxon>Pseudomonadati</taxon>
        <taxon>Pseudomonadota</taxon>
        <taxon>Betaproteobacteria</taxon>
        <taxon>Burkholderiales</taxon>
        <taxon>Burkholderiaceae</taxon>
        <taxon>Cupriavidus</taxon>
    </lineage>
</organism>
<reference key="1">
    <citation type="journal article" date="2010" name="PLoS ONE">
        <title>The complete multipartite genome sequence of Cupriavidus necator JMP134, a versatile pollutant degrader.</title>
        <authorList>
            <person name="Lykidis A."/>
            <person name="Perez-Pantoja D."/>
            <person name="Ledger T."/>
            <person name="Mavromatis K."/>
            <person name="Anderson I.J."/>
            <person name="Ivanova N.N."/>
            <person name="Hooper S.D."/>
            <person name="Lapidus A."/>
            <person name="Lucas S."/>
            <person name="Gonzalez B."/>
            <person name="Kyrpides N.C."/>
        </authorList>
    </citation>
    <scope>NUCLEOTIDE SEQUENCE [LARGE SCALE GENOMIC DNA]</scope>
    <source>
        <strain>JMP134 / LMG 1197</strain>
    </source>
</reference>